<comment type="similarity">
    <text evidence="1">Belongs to the bacterial ribosomal protein bS21 family.</text>
</comment>
<reference key="1">
    <citation type="submission" date="2008-05" db="EMBL/GenBank/DDBJ databases">
        <title>Complete sequence of chromosome 1 of Ralstonia pickettii 12J.</title>
        <authorList>
            <person name="Lucas S."/>
            <person name="Copeland A."/>
            <person name="Lapidus A."/>
            <person name="Glavina del Rio T."/>
            <person name="Dalin E."/>
            <person name="Tice H."/>
            <person name="Bruce D."/>
            <person name="Goodwin L."/>
            <person name="Pitluck S."/>
            <person name="Meincke L."/>
            <person name="Brettin T."/>
            <person name="Detter J.C."/>
            <person name="Han C."/>
            <person name="Kuske C.R."/>
            <person name="Schmutz J."/>
            <person name="Larimer F."/>
            <person name="Land M."/>
            <person name="Hauser L."/>
            <person name="Kyrpides N."/>
            <person name="Mikhailova N."/>
            <person name="Marsh T."/>
            <person name="Richardson P."/>
        </authorList>
    </citation>
    <scope>NUCLEOTIDE SEQUENCE [LARGE SCALE GENOMIC DNA]</scope>
    <source>
        <strain>12J</strain>
    </source>
</reference>
<sequence>MTTIRLKENEPVEVALRRFRREIERTGLIKELRARTAYEKPTTERKRKKAAAVSRTRKRLRSQMLPKKLY</sequence>
<keyword id="KW-0687">Ribonucleoprotein</keyword>
<keyword id="KW-0689">Ribosomal protein</keyword>
<name>RS21_RALPJ</name>
<proteinExistence type="inferred from homology"/>
<feature type="chain" id="PRO_1000120652" description="Small ribosomal subunit protein bS21">
    <location>
        <begin position="1"/>
        <end position="70"/>
    </location>
</feature>
<feature type="region of interest" description="Disordered" evidence="2">
    <location>
        <begin position="39"/>
        <end position="70"/>
    </location>
</feature>
<feature type="compositionally biased region" description="Basic residues" evidence="2">
    <location>
        <begin position="45"/>
        <end position="61"/>
    </location>
</feature>
<dbReference type="EMBL" id="CP001068">
    <property type="protein sequence ID" value="ACD28867.1"/>
    <property type="molecule type" value="Genomic_DNA"/>
</dbReference>
<dbReference type="SMR" id="B2U814"/>
<dbReference type="STRING" id="402626.Rpic_3749"/>
<dbReference type="KEGG" id="rpi:Rpic_3749"/>
<dbReference type="eggNOG" id="COG0828">
    <property type="taxonomic scope" value="Bacteria"/>
</dbReference>
<dbReference type="HOGENOM" id="CLU_159258_1_1_4"/>
<dbReference type="GO" id="GO:1990904">
    <property type="term" value="C:ribonucleoprotein complex"/>
    <property type="evidence" value="ECO:0007669"/>
    <property type="project" value="UniProtKB-KW"/>
</dbReference>
<dbReference type="GO" id="GO:0005840">
    <property type="term" value="C:ribosome"/>
    <property type="evidence" value="ECO:0007669"/>
    <property type="project" value="UniProtKB-KW"/>
</dbReference>
<dbReference type="GO" id="GO:0003735">
    <property type="term" value="F:structural constituent of ribosome"/>
    <property type="evidence" value="ECO:0007669"/>
    <property type="project" value="InterPro"/>
</dbReference>
<dbReference type="GO" id="GO:0006412">
    <property type="term" value="P:translation"/>
    <property type="evidence" value="ECO:0007669"/>
    <property type="project" value="UniProtKB-UniRule"/>
</dbReference>
<dbReference type="Gene3D" id="1.20.5.1150">
    <property type="entry name" value="Ribosomal protein S8"/>
    <property type="match status" value="1"/>
</dbReference>
<dbReference type="HAMAP" id="MF_00358">
    <property type="entry name" value="Ribosomal_bS21"/>
    <property type="match status" value="1"/>
</dbReference>
<dbReference type="InterPro" id="IPR001911">
    <property type="entry name" value="Ribosomal_bS21"/>
</dbReference>
<dbReference type="InterPro" id="IPR038380">
    <property type="entry name" value="Ribosomal_bS21_sf"/>
</dbReference>
<dbReference type="NCBIfam" id="TIGR00030">
    <property type="entry name" value="S21p"/>
    <property type="match status" value="1"/>
</dbReference>
<dbReference type="PANTHER" id="PTHR21109">
    <property type="entry name" value="MITOCHONDRIAL 28S RIBOSOMAL PROTEIN S21"/>
    <property type="match status" value="1"/>
</dbReference>
<dbReference type="PANTHER" id="PTHR21109:SF22">
    <property type="entry name" value="SMALL RIBOSOMAL SUBUNIT PROTEIN BS21"/>
    <property type="match status" value="1"/>
</dbReference>
<dbReference type="Pfam" id="PF01165">
    <property type="entry name" value="Ribosomal_S21"/>
    <property type="match status" value="1"/>
</dbReference>
<dbReference type="PRINTS" id="PR00976">
    <property type="entry name" value="RIBOSOMALS21"/>
</dbReference>
<gene>
    <name evidence="1" type="primary">rpsU</name>
    <name type="ordered locus">Rpic_3749</name>
</gene>
<evidence type="ECO:0000255" key="1">
    <source>
        <dbReference type="HAMAP-Rule" id="MF_00358"/>
    </source>
</evidence>
<evidence type="ECO:0000256" key="2">
    <source>
        <dbReference type="SAM" id="MobiDB-lite"/>
    </source>
</evidence>
<evidence type="ECO:0000305" key="3"/>
<protein>
    <recommendedName>
        <fullName evidence="1">Small ribosomal subunit protein bS21</fullName>
    </recommendedName>
    <alternativeName>
        <fullName evidence="3">30S ribosomal protein S21</fullName>
    </alternativeName>
</protein>
<accession>B2U814</accession>
<organism>
    <name type="scientific">Ralstonia pickettii (strain 12J)</name>
    <dbReference type="NCBI Taxonomy" id="402626"/>
    <lineage>
        <taxon>Bacteria</taxon>
        <taxon>Pseudomonadati</taxon>
        <taxon>Pseudomonadota</taxon>
        <taxon>Betaproteobacteria</taxon>
        <taxon>Burkholderiales</taxon>
        <taxon>Burkholderiaceae</taxon>
        <taxon>Ralstonia</taxon>
    </lineage>
</organism>